<protein>
    <recommendedName>
        <fullName evidence="5">Toxin YobL</fullName>
    </recommendedName>
    <alternativeName>
        <fullName evidence="6">DNase YobL</fullName>
    </alternativeName>
</protein>
<gene>
    <name type="primary">yobL</name>
    <name type="ordered locus">BSU19000</name>
</gene>
<organism>
    <name type="scientific">Bacillus subtilis (strain 168)</name>
    <dbReference type="NCBI Taxonomy" id="224308"/>
    <lineage>
        <taxon>Bacteria</taxon>
        <taxon>Bacillati</taxon>
        <taxon>Bacillota</taxon>
        <taxon>Bacilli</taxon>
        <taxon>Bacillales</taxon>
        <taxon>Bacillaceae</taxon>
        <taxon>Bacillus</taxon>
    </lineage>
</organism>
<keyword id="KW-0175">Coiled coil</keyword>
<keyword id="KW-0378">Hydrolase</keyword>
<keyword id="KW-0540">Nuclease</keyword>
<keyword id="KW-1185">Reference proteome</keyword>
<keyword id="KW-0964">Secreted</keyword>
<keyword id="KW-0800">Toxin</keyword>
<proteinExistence type="evidence at protein level"/>
<comment type="function">
    <text evidence="4">Toxic component of one of 6 LXG toxin-immunity modules in this strain. They promote kin selection, mediate competition in biofilms, and drive spatial segregation of different strains, indicating that LXG toxins may help avoid warfare between strains in biofilms. Mediates intercellular competition during biofilm formation; disruption of the operon disadvantages the bacteria, but overexpression of the cognate immunity protein restores growth in competition with wild-type. Overexpression alone in situ causes growth arrest but not cell lysis, a large decrease in chromosomal DNA content and the production of anucleate cells. No effect is seen on rRNA. Co-overexpression with cognate immunity protein YobK does not cause growth arrest. The toxic effect is dependent on the epsA and tapA operons which are required for biofilm formation.</text>
</comment>
<comment type="subunit">
    <text evidence="3">Interacts with cognate immunity protein YobK but not with non-cognate putative immunity protein YezG. The interaction inhibits the toxic activity of YobL.</text>
</comment>
<comment type="subcellular location">
    <subcellularLocation>
        <location evidence="7">Secreted</location>
    </subcellularLocation>
    <text evidence="4">Delivery to target cells requires the type VII secretion system (T7SS) and YukE.</text>
</comment>
<comment type="induction">
    <text evidence="4">Expressed on rich and minimal solid media likely in early stationary phase; not dependent on DegSU. Not expressed in liquid LB, but only under conditions that promote biofilm formation.</text>
</comment>
<comment type="disruption phenotype">
    <text evidence="4">Deletion of the yobL-yobK operon has no visible growth phenotype, however it is out-competed by wild-type cells.</text>
</comment>
<comment type="similarity">
    <text evidence="5">In the N-terminal section; belongs to the LXG family.</text>
</comment>
<comment type="caution">
    <text evidence="3">Was originally thought to be an RNase; when the C-terminus (residues 449-600) is expressed in E.coli it has RNase, not DNase activity, and inhibits growth upon expression in E.coli. In vitro RNase activity and in vivo growth inhibition are neutralized by cognate immunity protein YobK, but not by immunity proteins specific to other LXG toxins. Mutation of His-562 to Ala leads to loss of growth inhibition and RNase activity in E.coli.</text>
</comment>
<sequence length="600" mass="67770">MKVFEADSLLFEADKRTKEYKELRSQMVKLKKAFKEVANLDDSEFSGKGADNIKAFYHGHVGVTDQWIDLIDMKIAFLSSMSATLEDAKMSDAYIEESFLEHELANAYAKSKSIMSEQKKAMKDILNNINDILPLEIFSTEDFKDKLSSADDKREKTIDKLNKLDEDLKTEYAETEPNEQFIQQDFKKLQESTGKGKNATPIHYNAKAYRESDIHKKKGDIEKHSEAYLSVKKEEAKEREIKELKKKLNDGVSDPDEYLEIAKKVGYENLEPTQVQLAVQIEQAKQLEGAGEITWDIVKGVGVGLYDVGKDTVTGIWDFITDPGETLSALGNAAMHPVKTYDAISAAIEESYQKDMVNGDAYSRSRWVTYAIGSVAVAVVGTKGAGAINKADAAGKVINKASQAGKKIKDVKIPDLLPYNPKYKLALADNVPYNVVDSQNLKNELLTNAKKIPDGTRKPFTGQKKSPPWLNKEKYDAYEIEGKVKAKGKVKDVSRRVYTMKDIDINQKTEFGVTNLQLMKNGNAPYAKDGTQINLHHLIQEEPGPMLEIPNSLHTKYSDVIHQLKSDGESFRNDKVLKAQYESFRKRYWKWRAKQFENEN</sequence>
<accession>O34330</accession>
<accession>Q796E2</accession>
<name>YOBL_BACSU</name>
<evidence type="ECO:0000255" key="1"/>
<evidence type="ECO:0000255" key="2">
    <source>
        <dbReference type="PROSITE-ProRule" id="PRU01092"/>
    </source>
</evidence>
<evidence type="ECO:0000269" key="3">
    <source>
    </source>
</evidence>
<evidence type="ECO:0000269" key="4">
    <source>
    </source>
</evidence>
<evidence type="ECO:0000303" key="5">
    <source>
    </source>
</evidence>
<evidence type="ECO:0000303" key="6">
    <source>
    </source>
</evidence>
<evidence type="ECO:0000305" key="7">
    <source>
    </source>
</evidence>
<reference key="1">
    <citation type="submission" date="1997-10" db="EMBL/GenBank/DDBJ databases">
        <title>Sequence analysis of the Bacillus subtilis chromosome region between the terC and odhAB loci cloned in a yeast artificial chromosome.</title>
        <authorList>
            <person name="Lapidus A."/>
            <person name="Galleron N."/>
            <person name="Sorokin A."/>
            <person name="Ehrlich S.D."/>
        </authorList>
    </citation>
    <scope>NUCLEOTIDE SEQUENCE [GENOMIC DNA]</scope>
</reference>
<reference key="2">
    <citation type="journal article" date="1997" name="Nature">
        <title>The complete genome sequence of the Gram-positive bacterium Bacillus subtilis.</title>
        <authorList>
            <person name="Kunst F."/>
            <person name="Ogasawara N."/>
            <person name="Moszer I."/>
            <person name="Albertini A.M."/>
            <person name="Alloni G."/>
            <person name="Azevedo V."/>
            <person name="Bertero M.G."/>
            <person name="Bessieres P."/>
            <person name="Bolotin A."/>
            <person name="Borchert S."/>
            <person name="Borriss R."/>
            <person name="Boursier L."/>
            <person name="Brans A."/>
            <person name="Braun M."/>
            <person name="Brignell S.C."/>
            <person name="Bron S."/>
            <person name="Brouillet S."/>
            <person name="Bruschi C.V."/>
            <person name="Caldwell B."/>
            <person name="Capuano V."/>
            <person name="Carter N.M."/>
            <person name="Choi S.-K."/>
            <person name="Codani J.-J."/>
            <person name="Connerton I.F."/>
            <person name="Cummings N.J."/>
            <person name="Daniel R.A."/>
            <person name="Denizot F."/>
            <person name="Devine K.M."/>
            <person name="Duesterhoeft A."/>
            <person name="Ehrlich S.D."/>
            <person name="Emmerson P.T."/>
            <person name="Entian K.-D."/>
            <person name="Errington J."/>
            <person name="Fabret C."/>
            <person name="Ferrari E."/>
            <person name="Foulger D."/>
            <person name="Fritz C."/>
            <person name="Fujita M."/>
            <person name="Fujita Y."/>
            <person name="Fuma S."/>
            <person name="Galizzi A."/>
            <person name="Galleron N."/>
            <person name="Ghim S.-Y."/>
            <person name="Glaser P."/>
            <person name="Goffeau A."/>
            <person name="Golightly E.J."/>
            <person name="Grandi G."/>
            <person name="Guiseppi G."/>
            <person name="Guy B.J."/>
            <person name="Haga K."/>
            <person name="Haiech J."/>
            <person name="Harwood C.R."/>
            <person name="Henaut A."/>
            <person name="Hilbert H."/>
            <person name="Holsappel S."/>
            <person name="Hosono S."/>
            <person name="Hullo M.-F."/>
            <person name="Itaya M."/>
            <person name="Jones L.-M."/>
            <person name="Joris B."/>
            <person name="Karamata D."/>
            <person name="Kasahara Y."/>
            <person name="Klaerr-Blanchard M."/>
            <person name="Klein C."/>
            <person name="Kobayashi Y."/>
            <person name="Koetter P."/>
            <person name="Koningstein G."/>
            <person name="Krogh S."/>
            <person name="Kumano M."/>
            <person name="Kurita K."/>
            <person name="Lapidus A."/>
            <person name="Lardinois S."/>
            <person name="Lauber J."/>
            <person name="Lazarevic V."/>
            <person name="Lee S.-M."/>
            <person name="Levine A."/>
            <person name="Liu H."/>
            <person name="Masuda S."/>
            <person name="Mauel C."/>
            <person name="Medigue C."/>
            <person name="Medina N."/>
            <person name="Mellado R.P."/>
            <person name="Mizuno M."/>
            <person name="Moestl D."/>
            <person name="Nakai S."/>
            <person name="Noback M."/>
            <person name="Noone D."/>
            <person name="O'Reilly M."/>
            <person name="Ogawa K."/>
            <person name="Ogiwara A."/>
            <person name="Oudega B."/>
            <person name="Park S.-H."/>
            <person name="Parro V."/>
            <person name="Pohl T.M."/>
            <person name="Portetelle D."/>
            <person name="Porwollik S."/>
            <person name="Prescott A.M."/>
            <person name="Presecan E."/>
            <person name="Pujic P."/>
            <person name="Purnelle B."/>
            <person name="Rapoport G."/>
            <person name="Rey M."/>
            <person name="Reynolds S."/>
            <person name="Rieger M."/>
            <person name="Rivolta C."/>
            <person name="Rocha E."/>
            <person name="Roche B."/>
            <person name="Rose M."/>
            <person name="Sadaie Y."/>
            <person name="Sato T."/>
            <person name="Scanlan E."/>
            <person name="Schleich S."/>
            <person name="Schroeter R."/>
            <person name="Scoffone F."/>
            <person name="Sekiguchi J."/>
            <person name="Sekowska A."/>
            <person name="Seror S.J."/>
            <person name="Serror P."/>
            <person name="Shin B.-S."/>
            <person name="Soldo B."/>
            <person name="Sorokin A."/>
            <person name="Tacconi E."/>
            <person name="Takagi T."/>
            <person name="Takahashi H."/>
            <person name="Takemaru K."/>
            <person name="Takeuchi M."/>
            <person name="Tamakoshi A."/>
            <person name="Tanaka T."/>
            <person name="Terpstra P."/>
            <person name="Tognoni A."/>
            <person name="Tosato V."/>
            <person name="Uchiyama S."/>
            <person name="Vandenbol M."/>
            <person name="Vannier F."/>
            <person name="Vassarotti A."/>
            <person name="Viari A."/>
            <person name="Wambutt R."/>
            <person name="Wedler E."/>
            <person name="Wedler H."/>
            <person name="Weitzenegger T."/>
            <person name="Winters P."/>
            <person name="Wipat A."/>
            <person name="Yamamoto H."/>
            <person name="Yamane K."/>
            <person name="Yasumoto K."/>
            <person name="Yata K."/>
            <person name="Yoshida K."/>
            <person name="Yoshikawa H.-F."/>
            <person name="Zumstein E."/>
            <person name="Yoshikawa H."/>
            <person name="Danchin A."/>
        </authorList>
    </citation>
    <scope>NUCLEOTIDE SEQUENCE [LARGE SCALE GENOMIC DNA]</scope>
    <source>
        <strain>168</strain>
    </source>
</reference>
<reference key="3">
    <citation type="journal article" date="2012" name="FEBS Lett.">
        <title>A novel family of toxin/antitoxin proteins in Bacillus species.</title>
        <authorList>
            <person name="Holberger L.E."/>
            <person name="Garza-Sanchez F."/>
            <person name="Lamoureux J."/>
            <person name="Low D.A."/>
            <person name="Hayes C.S."/>
        </authorList>
    </citation>
    <scope>INCORRECT FUNCTION AS AN RNASE</scope>
    <scope>FUNCTION AS A TOXIN</scope>
    <scope>INTERACTION WITH YOBK</scope>
    <scope>EXPRESSION IN E.COLI</scope>
    <source>
        <strain>168</strain>
    </source>
</reference>
<reference key="4">
    <citation type="journal article" date="2021" name="PLoS Genet.">
        <title>Diverse LXG toxin and antitoxin systems specifically mediate intraspecies competition in Bacillus subtilis biofilms.</title>
        <authorList>
            <person name="Kobayashi K."/>
        </authorList>
    </citation>
    <scope>FUNCTION AS A TOXIN</scope>
    <scope>FUNCTION AS A DNASE</scope>
    <scope>SUBCELLULAR LOCATION</scope>
    <scope>INDUCTION</scope>
    <scope>DISRUPTION PHENOTYPE</scope>
    <source>
        <strain>168 / Marburg / ATCC 6051 / DSM 10 / JCM 1465 / NBRC 13719 / NCIMB 3610 / NRRL NRS-744 / VKM B-501</strain>
    </source>
</reference>
<feature type="chain" id="PRO_0000360800" description="Toxin YobL">
    <location>
        <begin position="1"/>
        <end position="600"/>
    </location>
</feature>
<feature type="domain" description="LXG" evidence="2">
    <location>
        <begin position="1"/>
        <end position="235"/>
    </location>
</feature>
<feature type="coiled-coil region" evidence="1">
    <location>
        <begin position="12"/>
        <end position="40"/>
    </location>
</feature>
<feature type="coiled-coil region" evidence="1">
    <location>
        <begin position="141"/>
        <end position="176"/>
    </location>
</feature>
<dbReference type="EMBL" id="AF027868">
    <property type="protein sequence ID" value="AAB84464.1"/>
    <property type="molecule type" value="Genomic_DNA"/>
</dbReference>
<dbReference type="EMBL" id="AL009126">
    <property type="protein sequence ID" value="CAB13792.1"/>
    <property type="molecule type" value="Genomic_DNA"/>
</dbReference>
<dbReference type="PIR" id="C69899">
    <property type="entry name" value="C69899"/>
</dbReference>
<dbReference type="RefSeq" id="WP_004399481.1">
    <property type="nucleotide sequence ID" value="NZ_OZ025638.1"/>
</dbReference>
<dbReference type="FunCoup" id="O34330">
    <property type="interactions" value="49"/>
</dbReference>
<dbReference type="IntAct" id="O34330">
    <property type="interactions" value="1"/>
</dbReference>
<dbReference type="MINT" id="O34330"/>
<dbReference type="STRING" id="224308.BSU19000"/>
<dbReference type="PaxDb" id="224308-BSU19000"/>
<dbReference type="EnsemblBacteria" id="CAB13792">
    <property type="protein sequence ID" value="CAB13792"/>
    <property type="gene ID" value="BSU_19000"/>
</dbReference>
<dbReference type="GeneID" id="939624"/>
<dbReference type="KEGG" id="bsu:BSU19000"/>
<dbReference type="PATRIC" id="fig|224308.179.peg.2078"/>
<dbReference type="eggNOG" id="COG5444">
    <property type="taxonomic scope" value="Bacteria"/>
</dbReference>
<dbReference type="InParanoid" id="O34330"/>
<dbReference type="OrthoDB" id="7182479at2"/>
<dbReference type="PhylomeDB" id="O34330"/>
<dbReference type="BioCyc" id="BSUB:BSU19000-MONOMER"/>
<dbReference type="Proteomes" id="UP000001570">
    <property type="component" value="Chromosome"/>
</dbReference>
<dbReference type="GO" id="GO:0005576">
    <property type="term" value="C:extracellular region"/>
    <property type="evidence" value="ECO:0007669"/>
    <property type="project" value="UniProtKB-SubCell"/>
</dbReference>
<dbReference type="GO" id="GO:0004518">
    <property type="term" value="F:nuclease activity"/>
    <property type="evidence" value="ECO:0007669"/>
    <property type="project" value="UniProtKB-KW"/>
</dbReference>
<dbReference type="GO" id="GO:0090729">
    <property type="term" value="F:toxin activity"/>
    <property type="evidence" value="ECO:0007669"/>
    <property type="project" value="UniProtKB-KW"/>
</dbReference>
<dbReference type="InterPro" id="IPR051768">
    <property type="entry name" value="Bact_secretion_toxin"/>
</dbReference>
<dbReference type="InterPro" id="IPR026834">
    <property type="entry name" value="LHH"/>
</dbReference>
<dbReference type="InterPro" id="IPR006829">
    <property type="entry name" value="LXG_dom"/>
</dbReference>
<dbReference type="PANTHER" id="PTHR34976">
    <property type="entry name" value="RIBONUCLEASE YQCG-RELATED"/>
    <property type="match status" value="1"/>
</dbReference>
<dbReference type="PANTHER" id="PTHR34976:SF2">
    <property type="entry name" value="TYPE VII SECRETION SYSTEM PROTEIN ESSD"/>
    <property type="match status" value="1"/>
</dbReference>
<dbReference type="Pfam" id="PF14411">
    <property type="entry name" value="LHH"/>
    <property type="match status" value="1"/>
</dbReference>
<dbReference type="Pfam" id="PF04740">
    <property type="entry name" value="LXG"/>
    <property type="match status" value="1"/>
</dbReference>
<dbReference type="PROSITE" id="PS51756">
    <property type="entry name" value="LXG"/>
    <property type="match status" value="1"/>
</dbReference>